<comment type="function">
    <text evidence="1">Component of the cytochrome b6-f complex, which mediates electron transfer between photosystem II (PSII) and photosystem I (PSI), cyclic electron flow around PSI, and state transitions.</text>
</comment>
<comment type="cofactor">
    <cofactor evidence="1">
        <name>heme b</name>
        <dbReference type="ChEBI" id="CHEBI:60344"/>
    </cofactor>
    <text evidence="1">Binds 2 heme b groups non-covalently with two histidine residues as axial ligands.</text>
</comment>
<comment type="cofactor">
    <cofactor evidence="1">
        <name>heme c</name>
        <dbReference type="ChEBI" id="CHEBI:61717"/>
    </cofactor>
    <text evidence="1">Binds one heme group covalently by a single cysteine link with no axial amino acid ligand. This heme was named heme ci.</text>
</comment>
<comment type="subunit">
    <text evidence="1">The 4 large subunits of the cytochrome b6-f complex are cytochrome b6, subunit IV (17 kDa polypeptide, PetD), cytochrome f and the Rieske protein, while the 4 small subunits are PetG, PetL, PetM and PetN. The complex functions as a dimer.</text>
</comment>
<comment type="subcellular location">
    <subcellularLocation>
        <location evidence="1">Cellular thylakoid membrane</location>
        <topology evidence="1">Multi-pass membrane protein</topology>
    </subcellularLocation>
</comment>
<comment type="miscellaneous">
    <text evidence="1">Heme 1 (or BH or b566) is high-potential and absorbs at about 566 nm, and heme 2 (or BL or b562) is low-potential and absorbs at about 562 nm.</text>
</comment>
<comment type="similarity">
    <text evidence="1">Belongs to the cytochrome b family. PetB subfamily.</text>
</comment>
<proteinExistence type="inferred from homology"/>
<accession>Q7V2X6</accession>
<gene>
    <name evidence="1" type="primary">petB</name>
    <name type="ordered locus">PMM0325</name>
</gene>
<dbReference type="EMBL" id="BX548174">
    <property type="protein sequence ID" value="CAE18784.1"/>
    <property type="molecule type" value="Genomic_DNA"/>
</dbReference>
<dbReference type="RefSeq" id="WP_011131962.1">
    <property type="nucleotide sequence ID" value="NC_005072.1"/>
</dbReference>
<dbReference type="SMR" id="Q7V2X6"/>
<dbReference type="STRING" id="59919.PMM0325"/>
<dbReference type="KEGG" id="pmm:PMM0325"/>
<dbReference type="eggNOG" id="COG1290">
    <property type="taxonomic scope" value="Bacteria"/>
</dbReference>
<dbReference type="HOGENOM" id="CLU_031114_0_2_3"/>
<dbReference type="OrthoDB" id="9804503at2"/>
<dbReference type="Proteomes" id="UP000001026">
    <property type="component" value="Chromosome"/>
</dbReference>
<dbReference type="GO" id="GO:0031676">
    <property type="term" value="C:plasma membrane-derived thylakoid membrane"/>
    <property type="evidence" value="ECO:0007669"/>
    <property type="project" value="UniProtKB-SubCell"/>
</dbReference>
<dbReference type="GO" id="GO:0045158">
    <property type="term" value="F:electron transporter, transferring electrons within cytochrome b6/f complex of photosystem II activity"/>
    <property type="evidence" value="ECO:0007669"/>
    <property type="project" value="UniProtKB-UniRule"/>
</dbReference>
<dbReference type="GO" id="GO:0046872">
    <property type="term" value="F:metal ion binding"/>
    <property type="evidence" value="ECO:0007669"/>
    <property type="project" value="UniProtKB-KW"/>
</dbReference>
<dbReference type="GO" id="GO:0016491">
    <property type="term" value="F:oxidoreductase activity"/>
    <property type="evidence" value="ECO:0007669"/>
    <property type="project" value="InterPro"/>
</dbReference>
<dbReference type="GO" id="GO:0015979">
    <property type="term" value="P:photosynthesis"/>
    <property type="evidence" value="ECO:0007669"/>
    <property type="project" value="UniProtKB-UniRule"/>
</dbReference>
<dbReference type="GO" id="GO:0022904">
    <property type="term" value="P:respiratory electron transport chain"/>
    <property type="evidence" value="ECO:0007669"/>
    <property type="project" value="InterPro"/>
</dbReference>
<dbReference type="CDD" id="cd00284">
    <property type="entry name" value="Cytochrome_b_N"/>
    <property type="match status" value="1"/>
</dbReference>
<dbReference type="Gene3D" id="1.20.810.10">
    <property type="entry name" value="Cytochrome Bc1 Complex, Chain C"/>
    <property type="match status" value="1"/>
</dbReference>
<dbReference type="HAMAP" id="MF_00633">
    <property type="entry name" value="Cytb6_f_cytb6"/>
    <property type="match status" value="1"/>
</dbReference>
<dbReference type="InterPro" id="IPR005797">
    <property type="entry name" value="Cyt_b/b6_N"/>
</dbReference>
<dbReference type="InterPro" id="IPR023530">
    <property type="entry name" value="Cyt_B6_PetB"/>
</dbReference>
<dbReference type="InterPro" id="IPR027387">
    <property type="entry name" value="Cytb/b6-like_sf"/>
</dbReference>
<dbReference type="InterPro" id="IPR048259">
    <property type="entry name" value="Cytochrome_b_N_euk/bac"/>
</dbReference>
<dbReference type="InterPro" id="IPR016174">
    <property type="entry name" value="Di-haem_cyt_TM"/>
</dbReference>
<dbReference type="NCBIfam" id="NF002990">
    <property type="entry name" value="PRK03735.1"/>
    <property type="match status" value="1"/>
</dbReference>
<dbReference type="PANTHER" id="PTHR19271">
    <property type="entry name" value="CYTOCHROME B"/>
    <property type="match status" value="1"/>
</dbReference>
<dbReference type="PANTHER" id="PTHR19271:SF16">
    <property type="entry name" value="CYTOCHROME B"/>
    <property type="match status" value="1"/>
</dbReference>
<dbReference type="Pfam" id="PF00033">
    <property type="entry name" value="Cytochrome_B"/>
    <property type="match status" value="1"/>
</dbReference>
<dbReference type="PIRSF" id="PIRSF000032">
    <property type="entry name" value="Cytochrome_b6"/>
    <property type="match status" value="1"/>
</dbReference>
<dbReference type="SUPFAM" id="SSF81342">
    <property type="entry name" value="Transmembrane di-heme cytochromes"/>
    <property type="match status" value="1"/>
</dbReference>
<dbReference type="PROSITE" id="PS51002">
    <property type="entry name" value="CYTB_NTER"/>
    <property type="match status" value="1"/>
</dbReference>
<feature type="chain" id="PRO_0000061832" description="Cytochrome b6">
    <location>
        <begin position="1"/>
        <end position="218"/>
    </location>
</feature>
<feature type="transmembrane region" description="Helical" evidence="1">
    <location>
        <begin position="35"/>
        <end position="55"/>
    </location>
</feature>
<feature type="transmembrane region" description="Helical" evidence="1">
    <location>
        <begin position="93"/>
        <end position="113"/>
    </location>
</feature>
<feature type="transmembrane region" description="Helical" evidence="1">
    <location>
        <begin position="119"/>
        <end position="139"/>
    </location>
</feature>
<feature type="transmembrane region" description="Helical" evidence="1">
    <location>
        <begin position="189"/>
        <end position="209"/>
    </location>
</feature>
<feature type="binding site" description="covalent" evidence="1">
    <location>
        <position position="38"/>
    </location>
    <ligand>
        <name>heme c</name>
        <dbReference type="ChEBI" id="CHEBI:61717"/>
    </ligand>
</feature>
<feature type="binding site" description="axial binding residue" evidence="1">
    <location>
        <position position="89"/>
    </location>
    <ligand>
        <name>heme b</name>
        <dbReference type="ChEBI" id="CHEBI:60344"/>
        <label>2</label>
    </ligand>
    <ligandPart>
        <name>Fe</name>
        <dbReference type="ChEBI" id="CHEBI:18248"/>
    </ligandPart>
</feature>
<feature type="binding site" description="axial binding residue" evidence="1">
    <location>
        <position position="103"/>
    </location>
    <ligand>
        <name>heme b</name>
        <dbReference type="ChEBI" id="CHEBI:60344"/>
        <label>1</label>
    </ligand>
    <ligandPart>
        <name>Fe</name>
        <dbReference type="ChEBI" id="CHEBI:18248"/>
    </ligandPart>
</feature>
<feature type="binding site" description="axial binding residue" evidence="1">
    <location>
        <position position="190"/>
    </location>
    <ligand>
        <name>heme b</name>
        <dbReference type="ChEBI" id="CHEBI:60344"/>
        <label>2</label>
    </ligand>
    <ligandPart>
        <name>Fe</name>
        <dbReference type="ChEBI" id="CHEBI:18248"/>
    </ligandPart>
</feature>
<feature type="binding site" description="axial binding residue" evidence="1">
    <location>
        <position position="205"/>
    </location>
    <ligand>
        <name>heme b</name>
        <dbReference type="ChEBI" id="CHEBI:60344"/>
        <label>1</label>
    </ligand>
    <ligandPart>
        <name>Fe</name>
        <dbReference type="ChEBI" id="CHEBI:18248"/>
    </ligandPart>
</feature>
<keyword id="KW-0249">Electron transport</keyword>
<keyword id="KW-0349">Heme</keyword>
<keyword id="KW-0408">Iron</keyword>
<keyword id="KW-0472">Membrane</keyword>
<keyword id="KW-0479">Metal-binding</keyword>
<keyword id="KW-0602">Photosynthesis</keyword>
<keyword id="KW-0793">Thylakoid</keyword>
<keyword id="KW-0812">Transmembrane</keyword>
<keyword id="KW-1133">Transmembrane helix</keyword>
<keyword id="KW-0813">Transport</keyword>
<sequence length="218" mass="24675">MSDSSSVYDWFQERLEIQDITDDVTSKYVPPHVNIFYCLGGITLVCFLIQFATGFAMTFYYKPTVTQAYNSVSYLMTDVSFGWLIRSVHRWSASMMVLMLILHVFRVYLTGGFKRPRELTWVTGVVMAVITVAFGVTGYSLPWDQVGYWAVKIVSGVPAAIPIIGDFMVELLRGGESVGQSTLTRFYSLHTFVLPWSLAVFMLMHFLMIRKQGISGPL</sequence>
<reference key="1">
    <citation type="journal article" date="2003" name="Nature">
        <title>Genome divergence in two Prochlorococcus ecotypes reflects oceanic niche differentiation.</title>
        <authorList>
            <person name="Rocap G."/>
            <person name="Larimer F.W."/>
            <person name="Lamerdin J.E."/>
            <person name="Malfatti S."/>
            <person name="Chain P."/>
            <person name="Ahlgren N.A."/>
            <person name="Arellano A."/>
            <person name="Coleman M."/>
            <person name="Hauser L."/>
            <person name="Hess W.R."/>
            <person name="Johnson Z.I."/>
            <person name="Land M.L."/>
            <person name="Lindell D."/>
            <person name="Post A.F."/>
            <person name="Regala W."/>
            <person name="Shah M."/>
            <person name="Shaw S.L."/>
            <person name="Steglich C."/>
            <person name="Sullivan M.B."/>
            <person name="Ting C.S."/>
            <person name="Tolonen A."/>
            <person name="Webb E.A."/>
            <person name="Zinser E.R."/>
            <person name="Chisholm S.W."/>
        </authorList>
    </citation>
    <scope>NUCLEOTIDE SEQUENCE [LARGE SCALE GENOMIC DNA]</scope>
    <source>
        <strain>CCMP1986 / NIES-2087 / MED4</strain>
    </source>
</reference>
<protein>
    <recommendedName>
        <fullName evidence="1">Cytochrome b6</fullName>
    </recommendedName>
</protein>
<organism>
    <name type="scientific">Prochlorococcus marinus subsp. pastoris (strain CCMP1986 / NIES-2087 / MED4)</name>
    <dbReference type="NCBI Taxonomy" id="59919"/>
    <lineage>
        <taxon>Bacteria</taxon>
        <taxon>Bacillati</taxon>
        <taxon>Cyanobacteriota</taxon>
        <taxon>Cyanophyceae</taxon>
        <taxon>Synechococcales</taxon>
        <taxon>Prochlorococcaceae</taxon>
        <taxon>Prochlorococcus</taxon>
    </lineage>
</organism>
<name>CYB6_PROMP</name>
<evidence type="ECO:0000255" key="1">
    <source>
        <dbReference type="HAMAP-Rule" id="MF_00633"/>
    </source>
</evidence>